<proteinExistence type="inferred from homology"/>
<feature type="chain" id="PRO_1000136154" description="Protein TsgA homolog">
    <location>
        <begin position="1"/>
        <end position="394"/>
    </location>
</feature>
<feature type="transmembrane region" description="Helical" evidence="1">
    <location>
        <begin position="11"/>
        <end position="31"/>
    </location>
</feature>
<feature type="transmembrane region" description="Helical" evidence="1">
    <location>
        <begin position="51"/>
        <end position="71"/>
    </location>
</feature>
<feature type="transmembrane region" description="Helical" evidence="1">
    <location>
        <begin position="76"/>
        <end position="96"/>
    </location>
</feature>
<feature type="transmembrane region" description="Helical" evidence="1">
    <location>
        <begin position="101"/>
        <end position="121"/>
    </location>
</feature>
<feature type="transmembrane region" description="Helical" evidence="1">
    <location>
        <begin position="134"/>
        <end position="154"/>
    </location>
</feature>
<feature type="transmembrane region" description="Helical" evidence="1">
    <location>
        <begin position="162"/>
        <end position="182"/>
    </location>
</feature>
<feature type="transmembrane region" description="Helical" evidence="1">
    <location>
        <begin position="206"/>
        <end position="226"/>
    </location>
</feature>
<feature type="transmembrane region" description="Helical" evidence="1">
    <location>
        <begin position="246"/>
        <end position="266"/>
    </location>
</feature>
<feature type="transmembrane region" description="Helical" evidence="1">
    <location>
        <begin position="274"/>
        <end position="294"/>
    </location>
</feature>
<feature type="transmembrane region" description="Helical" evidence="1">
    <location>
        <begin position="302"/>
        <end position="322"/>
    </location>
</feature>
<feature type="transmembrane region" description="Helical" evidence="1">
    <location>
        <begin position="334"/>
        <end position="354"/>
    </location>
</feature>
<feature type="transmembrane region" description="Helical" evidence="1">
    <location>
        <begin position="363"/>
        <end position="383"/>
    </location>
</feature>
<dbReference type="EMBL" id="CP001048">
    <property type="protein sequence ID" value="ACC90881.1"/>
    <property type="molecule type" value="Genomic_DNA"/>
</dbReference>
<dbReference type="RefSeq" id="WP_002215690.1">
    <property type="nucleotide sequence ID" value="NZ_CP009780.1"/>
</dbReference>
<dbReference type="SMR" id="B2K5S2"/>
<dbReference type="GeneID" id="57974438"/>
<dbReference type="KEGG" id="ypb:YPTS_3932"/>
<dbReference type="PATRIC" id="fig|502801.10.peg.3396"/>
<dbReference type="GO" id="GO:0005886">
    <property type="term" value="C:plasma membrane"/>
    <property type="evidence" value="ECO:0007669"/>
    <property type="project" value="UniProtKB-SubCell"/>
</dbReference>
<dbReference type="GO" id="GO:0022857">
    <property type="term" value="F:transmembrane transporter activity"/>
    <property type="evidence" value="ECO:0007669"/>
    <property type="project" value="InterPro"/>
</dbReference>
<dbReference type="Gene3D" id="1.20.1250.20">
    <property type="entry name" value="MFS general substrate transporter like domains"/>
    <property type="match status" value="2"/>
</dbReference>
<dbReference type="HAMAP" id="MF_01044">
    <property type="entry name" value="MFS_TsgA"/>
    <property type="match status" value="1"/>
</dbReference>
<dbReference type="InterPro" id="IPR011701">
    <property type="entry name" value="MFS"/>
</dbReference>
<dbReference type="InterPro" id="IPR020846">
    <property type="entry name" value="MFS_dom"/>
</dbReference>
<dbReference type="InterPro" id="IPR036259">
    <property type="entry name" value="MFS_trans_sf"/>
</dbReference>
<dbReference type="InterPro" id="IPR023528">
    <property type="entry name" value="MFS_TsgA"/>
</dbReference>
<dbReference type="InterPro" id="IPR050375">
    <property type="entry name" value="MFS_TsgA-like"/>
</dbReference>
<dbReference type="NCBIfam" id="NF002982">
    <property type="entry name" value="PRK03699.1"/>
    <property type="match status" value="1"/>
</dbReference>
<dbReference type="PANTHER" id="PTHR43702">
    <property type="entry name" value="L-FUCOSE-PROTON SYMPORTER"/>
    <property type="match status" value="1"/>
</dbReference>
<dbReference type="PANTHER" id="PTHR43702:SF3">
    <property type="entry name" value="PROTEIN TSGA"/>
    <property type="match status" value="1"/>
</dbReference>
<dbReference type="Pfam" id="PF07690">
    <property type="entry name" value="MFS_1"/>
    <property type="match status" value="1"/>
</dbReference>
<dbReference type="SUPFAM" id="SSF103473">
    <property type="entry name" value="MFS general substrate transporter"/>
    <property type="match status" value="1"/>
</dbReference>
<dbReference type="PROSITE" id="PS50850">
    <property type="entry name" value="MFS"/>
    <property type="match status" value="1"/>
</dbReference>
<comment type="subcellular location">
    <subcellularLocation>
        <location evidence="1">Cell inner membrane</location>
        <topology evidence="1">Multi-pass membrane protein</topology>
    </subcellularLocation>
</comment>
<comment type="similarity">
    <text evidence="1">Belongs to the major facilitator superfamily. TsgA family.</text>
</comment>
<name>TSGA_YERPB</name>
<keyword id="KW-0997">Cell inner membrane</keyword>
<keyword id="KW-1003">Cell membrane</keyword>
<keyword id="KW-0472">Membrane</keyword>
<keyword id="KW-0812">Transmembrane</keyword>
<keyword id="KW-1133">Transmembrane helix</keyword>
<accession>B2K5S2</accession>
<organism>
    <name type="scientific">Yersinia pseudotuberculosis serotype IB (strain PB1/+)</name>
    <dbReference type="NCBI Taxonomy" id="502801"/>
    <lineage>
        <taxon>Bacteria</taxon>
        <taxon>Pseudomonadati</taxon>
        <taxon>Pseudomonadota</taxon>
        <taxon>Gammaproteobacteria</taxon>
        <taxon>Enterobacterales</taxon>
        <taxon>Yersiniaceae</taxon>
        <taxon>Yersinia</taxon>
    </lineage>
</organism>
<evidence type="ECO:0000255" key="1">
    <source>
        <dbReference type="HAMAP-Rule" id="MF_01044"/>
    </source>
</evidence>
<gene>
    <name evidence="1" type="primary">tsgA</name>
    <name type="ordered locus">YPTS_3932</name>
</gene>
<protein>
    <recommendedName>
        <fullName evidence="1">Protein TsgA homolog</fullName>
    </recommendedName>
</protein>
<sequence length="394" mass="43653">MNNSNRIRLTWISYLSYALTGALVIVTGIVMGNIAEYFNLPIASMSNTFTFLNAGILISIFLNAWLMEIIPLKRQLVFGFILMLIAIAGLMVGHNLMIFSISMFIFGVVSGITMSIGTFLVTHMYEGRQRGSRLLFTDSFFSMAGMIFPIAAAMLLARHIEWYWVYACIGLLYVGIFVLTLCSEFPVLGHKATDQSKPVVKEKWGVGVLFLAIAALCYILGQLGFIQWVPEYATKTFNMNISQAGQLVSNFWISYMIGMWIFSFILRFFDLQRIVTVLAAMATLAMYLFVSTDNPAYLSYYILALGFVSSAIYTTLITLGSLQTKVSSPKLVNFILTCGTVGTMLTFVVTGPIVANNGVHAALETANGLYLAVFILCLALGFFTKHRSHGHVTH</sequence>
<reference key="1">
    <citation type="submission" date="2008-04" db="EMBL/GenBank/DDBJ databases">
        <title>Complete sequence of Yersinia pseudotuberculosis PB1/+.</title>
        <authorList>
            <person name="Copeland A."/>
            <person name="Lucas S."/>
            <person name="Lapidus A."/>
            <person name="Glavina del Rio T."/>
            <person name="Dalin E."/>
            <person name="Tice H."/>
            <person name="Bruce D."/>
            <person name="Goodwin L."/>
            <person name="Pitluck S."/>
            <person name="Munk A.C."/>
            <person name="Brettin T."/>
            <person name="Detter J.C."/>
            <person name="Han C."/>
            <person name="Tapia R."/>
            <person name="Schmutz J."/>
            <person name="Larimer F."/>
            <person name="Land M."/>
            <person name="Hauser L."/>
            <person name="Challacombe J.F."/>
            <person name="Green L."/>
            <person name="Lindler L.E."/>
            <person name="Nikolich M.P."/>
            <person name="Richardson P."/>
        </authorList>
    </citation>
    <scope>NUCLEOTIDE SEQUENCE [LARGE SCALE GENOMIC DNA]</scope>
    <source>
        <strain>PB1/+</strain>
    </source>
</reference>